<proteinExistence type="inferred from homology"/>
<name>RSMG_NEIMB</name>
<feature type="chain" id="PRO_0000184293" description="Ribosomal RNA small subunit methyltransferase G">
    <location>
        <begin position="1"/>
        <end position="207"/>
    </location>
</feature>
<feature type="binding site" evidence="1">
    <location>
        <position position="76"/>
    </location>
    <ligand>
        <name>S-adenosyl-L-methionine</name>
        <dbReference type="ChEBI" id="CHEBI:59789"/>
    </ligand>
</feature>
<feature type="binding site" evidence="1">
    <location>
        <position position="81"/>
    </location>
    <ligand>
        <name>S-adenosyl-L-methionine</name>
        <dbReference type="ChEBI" id="CHEBI:59789"/>
    </ligand>
</feature>
<feature type="binding site" evidence="1">
    <location>
        <begin position="127"/>
        <end position="128"/>
    </location>
    <ligand>
        <name>S-adenosyl-L-methionine</name>
        <dbReference type="ChEBI" id="CHEBI:59789"/>
    </ligand>
</feature>
<feature type="binding site" evidence="1">
    <location>
        <position position="141"/>
    </location>
    <ligand>
        <name>S-adenosyl-L-methionine</name>
        <dbReference type="ChEBI" id="CHEBI:59789"/>
    </ligand>
</feature>
<protein>
    <recommendedName>
        <fullName evidence="1">Ribosomal RNA small subunit methyltransferase G</fullName>
        <ecNumber evidence="1">2.1.1.170</ecNumber>
    </recommendedName>
    <alternativeName>
        <fullName evidence="1">16S rRNA 7-methylguanosine methyltransferase</fullName>
        <shortName evidence="1">16S rRNA m7G methyltransferase</shortName>
    </alternativeName>
</protein>
<accession>Q9K1G3</accession>
<sequence>MERKERLRAGIAAMGLDISETAQDRLLVYVDLLKKWNKTYNLTALRDEEKMIVHHLLDSLTLLPHIEGVQTMLDVGSGGGQPGIPAAVCRPDVQITLLDANTKKTAFLQQAVIELGLDNVRVVSGRVEAVSDVRADVVTSRAFAELADFVSWTVHLLKDGGYWAAMKGVYPQEEIGRLPQDVCVEKVQRLDVPGLDAERHIVILSKR</sequence>
<gene>
    <name evidence="1" type="primary">rsmG</name>
    <name type="ordered locus">NMB0190</name>
</gene>
<reference key="1">
    <citation type="journal article" date="2000" name="Science">
        <title>Complete genome sequence of Neisseria meningitidis serogroup B strain MC58.</title>
        <authorList>
            <person name="Tettelin H."/>
            <person name="Saunders N.J."/>
            <person name="Heidelberg J.F."/>
            <person name="Jeffries A.C."/>
            <person name="Nelson K.E."/>
            <person name="Eisen J.A."/>
            <person name="Ketchum K.A."/>
            <person name="Hood D.W."/>
            <person name="Peden J.F."/>
            <person name="Dodson R.J."/>
            <person name="Nelson W.C."/>
            <person name="Gwinn M.L."/>
            <person name="DeBoy R.T."/>
            <person name="Peterson J.D."/>
            <person name="Hickey E.K."/>
            <person name="Haft D.H."/>
            <person name="Salzberg S.L."/>
            <person name="White O."/>
            <person name="Fleischmann R.D."/>
            <person name="Dougherty B.A."/>
            <person name="Mason T.M."/>
            <person name="Ciecko A."/>
            <person name="Parksey D.S."/>
            <person name="Blair E."/>
            <person name="Cittone H."/>
            <person name="Clark E.B."/>
            <person name="Cotton M.D."/>
            <person name="Utterback T.R."/>
            <person name="Khouri H.M."/>
            <person name="Qin H."/>
            <person name="Vamathevan J.J."/>
            <person name="Gill J."/>
            <person name="Scarlato V."/>
            <person name="Masignani V."/>
            <person name="Pizza M."/>
            <person name="Grandi G."/>
            <person name="Sun L."/>
            <person name="Smith H.O."/>
            <person name="Fraser C.M."/>
            <person name="Moxon E.R."/>
            <person name="Rappuoli R."/>
            <person name="Venter J.C."/>
        </authorList>
    </citation>
    <scope>NUCLEOTIDE SEQUENCE [LARGE SCALE GENOMIC DNA]</scope>
    <source>
        <strain>ATCC BAA-335 / MC58</strain>
    </source>
</reference>
<evidence type="ECO:0000255" key="1">
    <source>
        <dbReference type="HAMAP-Rule" id="MF_00074"/>
    </source>
</evidence>
<organism>
    <name type="scientific">Neisseria meningitidis serogroup B (strain ATCC BAA-335 / MC58)</name>
    <dbReference type="NCBI Taxonomy" id="122586"/>
    <lineage>
        <taxon>Bacteria</taxon>
        <taxon>Pseudomonadati</taxon>
        <taxon>Pseudomonadota</taxon>
        <taxon>Betaproteobacteria</taxon>
        <taxon>Neisseriales</taxon>
        <taxon>Neisseriaceae</taxon>
        <taxon>Neisseria</taxon>
    </lineage>
</organism>
<keyword id="KW-0963">Cytoplasm</keyword>
<keyword id="KW-0489">Methyltransferase</keyword>
<keyword id="KW-1185">Reference proteome</keyword>
<keyword id="KW-0698">rRNA processing</keyword>
<keyword id="KW-0949">S-adenosyl-L-methionine</keyword>
<keyword id="KW-0808">Transferase</keyword>
<comment type="function">
    <text evidence="1">Specifically methylates the N7 position of guanine in position 527 of 16S rRNA.</text>
</comment>
<comment type="catalytic activity">
    <reaction evidence="1">
        <text>guanosine(527) in 16S rRNA + S-adenosyl-L-methionine = N(7)-methylguanosine(527) in 16S rRNA + S-adenosyl-L-homocysteine</text>
        <dbReference type="Rhea" id="RHEA:42732"/>
        <dbReference type="Rhea" id="RHEA-COMP:10209"/>
        <dbReference type="Rhea" id="RHEA-COMP:10210"/>
        <dbReference type="ChEBI" id="CHEBI:57856"/>
        <dbReference type="ChEBI" id="CHEBI:59789"/>
        <dbReference type="ChEBI" id="CHEBI:74269"/>
        <dbReference type="ChEBI" id="CHEBI:74480"/>
        <dbReference type="EC" id="2.1.1.170"/>
    </reaction>
</comment>
<comment type="subcellular location">
    <subcellularLocation>
        <location evidence="1">Cytoplasm</location>
    </subcellularLocation>
</comment>
<comment type="similarity">
    <text evidence="1">Belongs to the methyltransferase superfamily. RNA methyltransferase RsmG family.</text>
</comment>
<dbReference type="EC" id="2.1.1.170" evidence="1"/>
<dbReference type="EMBL" id="AE002098">
    <property type="protein sequence ID" value="AAF40647.1"/>
    <property type="molecule type" value="Genomic_DNA"/>
</dbReference>
<dbReference type="PIR" id="C81227">
    <property type="entry name" value="C81227"/>
</dbReference>
<dbReference type="RefSeq" id="NP_273248.1">
    <property type="nucleotide sequence ID" value="NC_003112.2"/>
</dbReference>
<dbReference type="RefSeq" id="WP_002226919.1">
    <property type="nucleotide sequence ID" value="NC_003112.2"/>
</dbReference>
<dbReference type="SMR" id="Q9K1G3"/>
<dbReference type="FunCoup" id="Q9K1G3">
    <property type="interactions" value="448"/>
</dbReference>
<dbReference type="STRING" id="122586.NMB0190"/>
<dbReference type="PaxDb" id="122586-NMB0190"/>
<dbReference type="KEGG" id="nme:NMB0190"/>
<dbReference type="PATRIC" id="fig|122586.8.peg.232"/>
<dbReference type="HOGENOM" id="CLU_065341_2_0_4"/>
<dbReference type="InParanoid" id="Q9K1G3"/>
<dbReference type="OrthoDB" id="9808773at2"/>
<dbReference type="Proteomes" id="UP000000425">
    <property type="component" value="Chromosome"/>
</dbReference>
<dbReference type="GO" id="GO:0005829">
    <property type="term" value="C:cytosol"/>
    <property type="evidence" value="ECO:0000318"/>
    <property type="project" value="GO_Central"/>
</dbReference>
<dbReference type="GO" id="GO:0070043">
    <property type="term" value="F:rRNA (guanine-N7-)-methyltransferase activity"/>
    <property type="evidence" value="ECO:0000318"/>
    <property type="project" value="GO_Central"/>
</dbReference>
<dbReference type="CDD" id="cd02440">
    <property type="entry name" value="AdoMet_MTases"/>
    <property type="match status" value="1"/>
</dbReference>
<dbReference type="FunFam" id="3.40.50.150:FF:000353">
    <property type="entry name" value="Ribosomal RNA small subunit methyltransferase G"/>
    <property type="match status" value="1"/>
</dbReference>
<dbReference type="Gene3D" id="3.40.50.150">
    <property type="entry name" value="Vaccinia Virus protein VP39"/>
    <property type="match status" value="1"/>
</dbReference>
<dbReference type="HAMAP" id="MF_00074">
    <property type="entry name" value="16SrRNA_methyltr_G"/>
    <property type="match status" value="1"/>
</dbReference>
<dbReference type="InterPro" id="IPR003682">
    <property type="entry name" value="rRNA_ssu_MeTfrase_G"/>
</dbReference>
<dbReference type="InterPro" id="IPR029063">
    <property type="entry name" value="SAM-dependent_MTases_sf"/>
</dbReference>
<dbReference type="NCBIfam" id="TIGR00138">
    <property type="entry name" value="rsmG_gidB"/>
    <property type="match status" value="1"/>
</dbReference>
<dbReference type="PANTHER" id="PTHR31760">
    <property type="entry name" value="S-ADENOSYL-L-METHIONINE-DEPENDENT METHYLTRANSFERASES SUPERFAMILY PROTEIN"/>
    <property type="match status" value="1"/>
</dbReference>
<dbReference type="PANTHER" id="PTHR31760:SF0">
    <property type="entry name" value="S-ADENOSYL-L-METHIONINE-DEPENDENT METHYLTRANSFERASES SUPERFAMILY PROTEIN"/>
    <property type="match status" value="1"/>
</dbReference>
<dbReference type="Pfam" id="PF02527">
    <property type="entry name" value="GidB"/>
    <property type="match status" value="1"/>
</dbReference>
<dbReference type="PIRSF" id="PIRSF003078">
    <property type="entry name" value="GidB"/>
    <property type="match status" value="1"/>
</dbReference>
<dbReference type="SUPFAM" id="SSF53335">
    <property type="entry name" value="S-adenosyl-L-methionine-dependent methyltransferases"/>
    <property type="match status" value="1"/>
</dbReference>